<organism>
    <name type="scientific">Staphylococcus aureus (strain MRSA252)</name>
    <dbReference type="NCBI Taxonomy" id="282458"/>
    <lineage>
        <taxon>Bacteria</taxon>
        <taxon>Bacillati</taxon>
        <taxon>Bacillota</taxon>
        <taxon>Bacilli</taxon>
        <taxon>Bacillales</taxon>
        <taxon>Staphylococcaceae</taxon>
        <taxon>Staphylococcus</taxon>
    </lineage>
</organism>
<feature type="chain" id="PRO_0000300086" description="Uncharacterized protein SAR1364">
    <location>
        <begin position="1"/>
        <end position="98"/>
    </location>
</feature>
<name>Y1364_STAAR</name>
<comment type="similarity">
    <text evidence="1">Belongs to the HesB/IscA family.</text>
</comment>
<sequence length="98" mass="11537">MQIELTDAAVTWFKNELELPENNKVLVFFVRYGGEFQLKQGFSPAFTVEPKEDVDIGYEQQYDDLNVVIAEKDLWYFEDDHIIVNVVDHEDEISYSKK</sequence>
<accession>Q6GH53</accession>
<dbReference type="EMBL" id="BX571856">
    <property type="protein sequence ID" value="CAG40362.1"/>
    <property type="molecule type" value="Genomic_DNA"/>
</dbReference>
<dbReference type="RefSeq" id="WP_001165373.1">
    <property type="nucleotide sequence ID" value="NC_002952.2"/>
</dbReference>
<dbReference type="SMR" id="Q6GH53"/>
<dbReference type="KEGG" id="sar:SAR1364"/>
<dbReference type="HOGENOM" id="CLU_163967_0_0_9"/>
<dbReference type="Proteomes" id="UP000000596">
    <property type="component" value="Chromosome"/>
</dbReference>
<dbReference type="InterPro" id="IPR035903">
    <property type="entry name" value="HesB-like_dom_sf"/>
</dbReference>
<dbReference type="InterPro" id="IPR008326">
    <property type="entry name" value="PdhI-like"/>
</dbReference>
<dbReference type="PIRSF" id="PIRSF034852">
    <property type="entry name" value="UCP034852"/>
    <property type="match status" value="1"/>
</dbReference>
<dbReference type="SUPFAM" id="SSF89360">
    <property type="entry name" value="HesB-like domain"/>
    <property type="match status" value="1"/>
</dbReference>
<protein>
    <recommendedName>
        <fullName>Uncharacterized protein SAR1364</fullName>
    </recommendedName>
</protein>
<proteinExistence type="inferred from homology"/>
<reference key="1">
    <citation type="journal article" date="2004" name="Proc. Natl. Acad. Sci. U.S.A.">
        <title>Complete genomes of two clinical Staphylococcus aureus strains: evidence for the rapid evolution of virulence and drug resistance.</title>
        <authorList>
            <person name="Holden M.T.G."/>
            <person name="Feil E.J."/>
            <person name="Lindsay J.A."/>
            <person name="Peacock S.J."/>
            <person name="Day N.P.J."/>
            <person name="Enright M.C."/>
            <person name="Foster T.J."/>
            <person name="Moore C.E."/>
            <person name="Hurst L."/>
            <person name="Atkin R."/>
            <person name="Barron A."/>
            <person name="Bason N."/>
            <person name="Bentley S.D."/>
            <person name="Chillingworth C."/>
            <person name="Chillingworth T."/>
            <person name="Churcher C."/>
            <person name="Clark L."/>
            <person name="Corton C."/>
            <person name="Cronin A."/>
            <person name="Doggett J."/>
            <person name="Dowd L."/>
            <person name="Feltwell T."/>
            <person name="Hance Z."/>
            <person name="Harris B."/>
            <person name="Hauser H."/>
            <person name="Holroyd S."/>
            <person name="Jagels K."/>
            <person name="James K.D."/>
            <person name="Lennard N."/>
            <person name="Line A."/>
            <person name="Mayes R."/>
            <person name="Moule S."/>
            <person name="Mungall K."/>
            <person name="Ormond D."/>
            <person name="Quail M.A."/>
            <person name="Rabbinowitsch E."/>
            <person name="Rutherford K.M."/>
            <person name="Sanders M."/>
            <person name="Sharp S."/>
            <person name="Simmonds M."/>
            <person name="Stevens K."/>
            <person name="Whitehead S."/>
            <person name="Barrell B.G."/>
            <person name="Spratt B.G."/>
            <person name="Parkhill J."/>
        </authorList>
    </citation>
    <scope>NUCLEOTIDE SEQUENCE [LARGE SCALE GENOMIC DNA]</scope>
    <source>
        <strain>MRSA252</strain>
    </source>
</reference>
<evidence type="ECO:0000305" key="1"/>
<gene>
    <name type="ordered locus">SAR1364</name>
</gene>